<sequence>MNKRFQGKVAVITGAAQGIGRRVAERMAAEGGRLLLVDRSELIHELADELVGVAEVLTLTADLEQFAECQRVMAAALERFGRLDILINNVGGTIWAKPFEHYQEREIEAEVRRSLFPTLWCCHAALAPMIEQGSGAIVNVSSVATRGIHRVPYGAAKGGVNALTACLAFETAERGIRVNATAPGGTEARHGGFRNSAEPSEQEKVWYQQIVDQSLDSSLMKRYGSIDEQVEAILFLASDAASYITGITLPVAGGDLGCQSCSVMFSVSG</sequence>
<geneLocation type="plasmid">
    <name>TOL pWW0</name>
</geneLocation>
<accession>P23102</accession>
<feature type="chain" id="PRO_0000054814" description="1,6-dihydroxycyclohexa-2,4-diene-1-carboxylate dehydrogenase">
    <location>
        <begin position="1"/>
        <end position="269"/>
    </location>
</feature>
<feature type="active site" description="Proton acceptor" evidence="2">
    <location>
        <position position="153"/>
    </location>
</feature>
<feature type="binding site" evidence="1">
    <location>
        <begin position="11"/>
        <end position="35"/>
    </location>
    <ligand>
        <name>NAD(+)</name>
        <dbReference type="ChEBI" id="CHEBI:57540"/>
    </ligand>
</feature>
<feature type="binding site" evidence="1">
    <location>
        <position position="142"/>
    </location>
    <ligand>
        <name>substrate</name>
    </ligand>
</feature>
<comment type="function">
    <text>Degradation of 2-hydro-1,2-dihydroxy benzoate (DHB) to catechol.</text>
</comment>
<comment type="catalytic activity">
    <reaction>
        <text>(1R,6S)-1,6-dihydroxycyclohexa-2,4-diene-1-carboxylate + NAD(+) = catechol + CO2 + NADH</text>
        <dbReference type="Rhea" id="RHEA:11560"/>
        <dbReference type="ChEBI" id="CHEBI:16526"/>
        <dbReference type="ChEBI" id="CHEBI:18135"/>
        <dbReference type="ChEBI" id="CHEBI:57540"/>
        <dbReference type="ChEBI" id="CHEBI:57945"/>
        <dbReference type="ChEBI" id="CHEBI:60129"/>
        <dbReference type="EC" id="1.3.1.25"/>
    </reaction>
</comment>
<comment type="pathway">
    <text>Aromatic compound metabolism; benzoate degradation via hydroxylation; catechol from benzoate: step 2/2.</text>
</comment>
<comment type="subunit">
    <text evidence="1">Homodimer.</text>
</comment>
<comment type="similarity">
    <text evidence="3">Belongs to the short-chain dehydrogenases/reductases (SDR) family.</text>
</comment>
<name>XYLL_PSEPU</name>
<proteinExistence type="inferred from homology"/>
<reference key="1">
    <citation type="journal article" date="1992" name="Eur. J. Biochem.">
        <title>Cis-diol dehydrogenases encoded by the TOL pWW0 plasmid xylL gene and the Acinetobacter calcoaceticus chromosomal benD gene are members of the short-chain alcohol dehydrogenase superfamily.</title>
        <authorList>
            <person name="Neidle E.L."/>
            <person name="Hartnett C."/>
            <person name="Ornston L.N."/>
            <person name="Bairoch A."/>
            <person name="Rekik M."/>
            <person name="Harayama S."/>
        </authorList>
    </citation>
    <scope>NUCLEOTIDE SEQUENCE [GENOMIC DNA]</scope>
</reference>
<keyword id="KW-0058">Aromatic hydrocarbons catabolism</keyword>
<keyword id="KW-0520">NAD</keyword>
<keyword id="KW-0560">Oxidoreductase</keyword>
<keyword id="KW-0614">Plasmid</keyword>
<organism>
    <name type="scientific">Pseudomonas putida</name>
    <name type="common">Arthrobacter siderocapsulatus</name>
    <dbReference type="NCBI Taxonomy" id="303"/>
    <lineage>
        <taxon>Bacteria</taxon>
        <taxon>Pseudomonadati</taxon>
        <taxon>Pseudomonadota</taxon>
        <taxon>Gammaproteobacteria</taxon>
        <taxon>Pseudomonadales</taxon>
        <taxon>Pseudomonadaceae</taxon>
        <taxon>Pseudomonas</taxon>
    </lineage>
</organism>
<gene>
    <name type="primary">xylL</name>
</gene>
<protein>
    <recommendedName>
        <fullName>1,6-dihydroxycyclohexa-2,4-diene-1-carboxylate dehydrogenase</fullName>
        <ecNumber>1.3.1.25</ecNumber>
    </recommendedName>
    <alternativeName>
        <fullName>2-hydro-1,2-dihydroxybenzoate dehydrogenase</fullName>
        <shortName>DHB dehydrogenase</shortName>
    </alternativeName>
    <alternativeName>
        <fullName>Cis-1,2-dihydroxy-3,4-cyclohexadiene-1-carboxylate dehydrogenase</fullName>
    </alternativeName>
    <alternativeName>
        <fullName>Cis-1,2-dihydroxycyclohexa-3,5-diene-1-carboxylate dehydrogenase</fullName>
    </alternativeName>
</protein>
<evidence type="ECO:0000250" key="1"/>
<evidence type="ECO:0000255" key="2">
    <source>
        <dbReference type="PROSITE-ProRule" id="PRU10001"/>
    </source>
</evidence>
<evidence type="ECO:0000305" key="3"/>
<dbReference type="EC" id="1.3.1.25"/>
<dbReference type="EMBL" id="M64747">
    <property type="protein sequence ID" value="AAA26050.1"/>
    <property type="molecule type" value="Genomic_DNA"/>
</dbReference>
<dbReference type="PIR" id="S23485">
    <property type="entry name" value="S23485"/>
</dbReference>
<dbReference type="RefSeq" id="NP_542868.1">
    <property type="nucleotide sequence ID" value="NC_003350.1"/>
</dbReference>
<dbReference type="RefSeq" id="WP_011005911.1">
    <property type="nucleotide sequence ID" value="NC_003350.1"/>
</dbReference>
<dbReference type="SMR" id="P23102"/>
<dbReference type="BioCyc" id="MetaCyc:MONOMER-2964"/>
<dbReference type="UniPathway" id="UPA00156">
    <property type="reaction ID" value="UER00255"/>
</dbReference>
<dbReference type="GO" id="GO:0047116">
    <property type="term" value="F:1,6-dihydroxycyclohexa-2,4-diene-1-carboxylate dehydrogenase activity"/>
    <property type="evidence" value="ECO:0007669"/>
    <property type="project" value="UniProtKB-EC"/>
</dbReference>
<dbReference type="GO" id="GO:0016616">
    <property type="term" value="F:oxidoreductase activity, acting on the CH-OH group of donors, NAD or NADP as acceptor"/>
    <property type="evidence" value="ECO:0007669"/>
    <property type="project" value="TreeGrafter"/>
</dbReference>
<dbReference type="GO" id="GO:0043640">
    <property type="term" value="P:benzoate catabolic process via hydroxylation"/>
    <property type="evidence" value="ECO:0007669"/>
    <property type="project" value="UniProtKB-UniPathway"/>
</dbReference>
<dbReference type="GO" id="GO:0030497">
    <property type="term" value="P:fatty acid elongation"/>
    <property type="evidence" value="ECO:0007669"/>
    <property type="project" value="TreeGrafter"/>
</dbReference>
<dbReference type="CDD" id="cd08937">
    <property type="entry name" value="DHB_DH-like_SDR_c"/>
    <property type="match status" value="1"/>
</dbReference>
<dbReference type="FunFam" id="3.40.50.720:FF:000084">
    <property type="entry name" value="Short-chain dehydrogenase reductase"/>
    <property type="match status" value="1"/>
</dbReference>
<dbReference type="Gene3D" id="3.40.50.720">
    <property type="entry name" value="NAD(P)-binding Rossmann-like Domain"/>
    <property type="match status" value="1"/>
</dbReference>
<dbReference type="InterPro" id="IPR047686">
    <property type="entry name" value="BenD"/>
</dbReference>
<dbReference type="InterPro" id="IPR036291">
    <property type="entry name" value="NAD(P)-bd_dom_sf"/>
</dbReference>
<dbReference type="InterPro" id="IPR020904">
    <property type="entry name" value="Sc_DH/Rdtase_CS"/>
</dbReference>
<dbReference type="InterPro" id="IPR002347">
    <property type="entry name" value="SDR_fam"/>
</dbReference>
<dbReference type="NCBIfam" id="NF040811">
    <property type="entry name" value="BenD"/>
    <property type="match status" value="1"/>
</dbReference>
<dbReference type="NCBIfam" id="NF009463">
    <property type="entry name" value="PRK12823.1"/>
    <property type="match status" value="1"/>
</dbReference>
<dbReference type="PANTHER" id="PTHR42760:SF123">
    <property type="entry name" value="OXIDOREDUCTASE"/>
    <property type="match status" value="1"/>
</dbReference>
<dbReference type="PANTHER" id="PTHR42760">
    <property type="entry name" value="SHORT-CHAIN DEHYDROGENASES/REDUCTASES FAMILY MEMBER"/>
    <property type="match status" value="1"/>
</dbReference>
<dbReference type="Pfam" id="PF00106">
    <property type="entry name" value="adh_short"/>
    <property type="match status" value="1"/>
</dbReference>
<dbReference type="PRINTS" id="PR00081">
    <property type="entry name" value="GDHRDH"/>
</dbReference>
<dbReference type="PRINTS" id="PR00080">
    <property type="entry name" value="SDRFAMILY"/>
</dbReference>
<dbReference type="SUPFAM" id="SSF51735">
    <property type="entry name" value="NAD(P)-binding Rossmann-fold domains"/>
    <property type="match status" value="1"/>
</dbReference>
<dbReference type="PROSITE" id="PS00061">
    <property type="entry name" value="ADH_SHORT"/>
    <property type="match status" value="1"/>
</dbReference>